<comment type="function">
    <text evidence="2 5 6">This is a copper-containing oxidase that functions in the formation of pigments such as melanins and other polyphenolic compounds. Catalyzes the rate-limiting conversions of tyrosine to DOPA, DOPA to DOPA-quinone and possibly 5,6 dihydroxyindole to indole-5'6 quinone (By similarity). Catalyzes the oxidation of 4-methylcatechol (PubMed:16185666, PubMed:19557749). Binds to the surface of hemocytes and is involved in hemocyte melanization (By similarity).</text>
</comment>
<comment type="catalytic activity">
    <reaction evidence="1">
        <text>L-tyrosine + O2 = L-dopaquinone + H2O</text>
        <dbReference type="Rhea" id="RHEA:18117"/>
        <dbReference type="ChEBI" id="CHEBI:15377"/>
        <dbReference type="ChEBI" id="CHEBI:15379"/>
        <dbReference type="ChEBI" id="CHEBI:57924"/>
        <dbReference type="ChEBI" id="CHEBI:58315"/>
        <dbReference type="EC" id="1.14.18.1"/>
    </reaction>
</comment>
<comment type="catalytic activity">
    <reaction evidence="1">
        <text>2 L-dopa + O2 = 2 L-dopaquinone + 2 H2O</text>
        <dbReference type="Rhea" id="RHEA:34287"/>
        <dbReference type="ChEBI" id="CHEBI:15377"/>
        <dbReference type="ChEBI" id="CHEBI:15379"/>
        <dbReference type="ChEBI" id="CHEBI:57504"/>
        <dbReference type="ChEBI" id="CHEBI:57924"/>
        <dbReference type="EC" id="1.14.18.1"/>
    </reaction>
</comment>
<comment type="cofactor">
    <cofactor evidence="2">
        <name>Cu(2+)</name>
        <dbReference type="ChEBI" id="CHEBI:29036"/>
    </cofactor>
    <text evidence="2">Binds 2 copper ions per subunit.</text>
</comment>
<comment type="activity regulation">
    <text evidence="5 6">Activated by a cationic detergent cetyl pyridinium chloride (CPC) (PubMed:16185666, PubMed:19557749). Inhibited by phenyl thio-urea (PTU) (PubMed:16185666).</text>
</comment>
<comment type="subunit">
    <text evidence="2">Heterodimer.</text>
</comment>
<comment type="subcellular location">
    <subcellularLocation>
        <location evidence="5">Secreted</location>
    </subcellularLocation>
    <text evidence="5">Secreted in the hemolymph.</text>
</comment>
<comment type="tissue specificity">
    <text evidence="5">Expressed in hemocytes.</text>
</comment>
<comment type="developmental stage">
    <text evidence="5">Expressed in larvae. Expressed on all days from the fourth through the sixth instar, with the highest expression in the fifth instar. The level varies in the sixth instar with reduced levels observed on the first day, significant on the next day, and diminished levels on the following two days. The maximum level is observed during the active feeding period.</text>
</comment>
<comment type="induction">
    <text evidence="5">Immediately upon microbial challenge with E.coli K-12. Expression increases 2.6-fold 6 hours after the challenge and 10.19-fold after 18 hours. No significant up-regulation in response to injury.</text>
</comment>
<comment type="PTM">
    <text evidence="6">Activated by the cleavage of the N-terminal propeptide by PPAE1.</text>
</comment>
<comment type="similarity">
    <text evidence="9">Belongs to the tyrosinase family.</text>
</comment>
<protein>
    <recommendedName>
        <fullName evidence="9">Phenoloxidase 1</fullName>
        <ecNumber evidence="1">1.14.18.1</ecNumber>
    </recommendedName>
    <alternativeName>
        <fullName evidence="7">Prophenoloxidase 1</fullName>
        <shortName evidence="7 8">Slppo1</shortName>
    </alternativeName>
</protein>
<feature type="propeptide" id="PRO_0000451220" description="Removed by PPAE1" evidence="6">
    <location>
        <begin position="1"/>
        <end position="101"/>
    </location>
</feature>
<feature type="chain" id="PRO_0000451221" description="Phenoloxidase 1" evidence="10">
    <location>
        <begin position="102"/>
        <end position="697"/>
    </location>
</feature>
<feature type="active site" description="Proton acceptor" evidence="3">
    <location>
        <position position="355"/>
    </location>
</feature>
<feature type="binding site" evidence="2">
    <location>
        <position position="217"/>
    </location>
    <ligand>
        <name>Cu cation</name>
        <dbReference type="ChEBI" id="CHEBI:23378"/>
        <label>A</label>
    </ligand>
</feature>
<feature type="binding site" evidence="2">
    <location>
        <position position="221"/>
    </location>
    <ligand>
        <name>Cu cation</name>
        <dbReference type="ChEBI" id="CHEBI:23378"/>
        <label>A</label>
    </ligand>
</feature>
<feature type="binding site" evidence="2">
    <location>
        <position position="247"/>
    </location>
    <ligand>
        <name>Cu cation</name>
        <dbReference type="ChEBI" id="CHEBI:23378"/>
        <label>A</label>
    </ligand>
</feature>
<feature type="binding site" evidence="2">
    <location>
        <position position="370"/>
    </location>
    <ligand>
        <name>Cu cation</name>
        <dbReference type="ChEBI" id="CHEBI:23378"/>
        <label>B</label>
    </ligand>
</feature>
<feature type="binding site" evidence="2">
    <location>
        <position position="374"/>
    </location>
    <ligand>
        <name>Cu cation</name>
        <dbReference type="ChEBI" id="CHEBI:23378"/>
        <label>B</label>
    </ligand>
</feature>
<feature type="binding site" evidence="2">
    <location>
        <position position="410"/>
    </location>
    <ligand>
        <name>Cu cation</name>
        <dbReference type="ChEBI" id="CHEBI:23378"/>
        <label>B</label>
    </ligand>
</feature>
<feature type="glycosylation site" description="N-linked (GlcNAc...) asparagine" evidence="4">
    <location>
        <position position="260"/>
    </location>
</feature>
<feature type="glycosylation site" description="N-linked (GlcNAc...) asparagine" evidence="4">
    <location>
        <position position="313"/>
    </location>
</feature>
<feature type="glycosylation site" description="N-linked (GlcNAc...) asparagine" evidence="4">
    <location>
        <position position="498"/>
    </location>
</feature>
<feature type="glycosylation site" description="N-linked (GlcNAc...) asparagine" evidence="4">
    <location>
        <position position="552"/>
    </location>
</feature>
<feature type="disulfide bond" evidence="2">
    <location>
        <begin position="587"/>
        <end position="631"/>
    </location>
</feature>
<feature type="disulfide bond" evidence="2">
    <location>
        <begin position="589"/>
        <end position="638"/>
    </location>
</feature>
<keyword id="KW-0186">Copper</keyword>
<keyword id="KW-1015">Disulfide bond</keyword>
<keyword id="KW-0325">Glycoprotein</keyword>
<keyword id="KW-0470">Melanin biosynthesis</keyword>
<keyword id="KW-0479">Metal-binding</keyword>
<keyword id="KW-0503">Monooxygenase</keyword>
<keyword id="KW-0560">Oxidoreductase</keyword>
<keyword id="KW-1185">Reference proteome</keyword>
<keyword id="KW-0964">Secreted</keyword>
<keyword id="KW-0865">Zymogen</keyword>
<proteinExistence type="evidence at protein level"/>
<reference evidence="11" key="1">
    <citation type="journal article" date="2005" name="Biochem. Biophys. Res. Commun.">
        <title>Immune cascade of Spodoptera litura: cloning, expression, and characterization of inducible prophenol oxidase.</title>
        <authorList>
            <person name="Rajagopal R."/>
            <person name="Thamilarasi K."/>
            <person name="Venkatesh G.R."/>
            <person name="Srinivas P."/>
            <person name="Bhatnagar R.K."/>
        </authorList>
    </citation>
    <scope>NUCLEOTIDE SEQUENCE [MRNA]</scope>
    <scope>FUNCTION</scope>
    <scope>ACTIVITY REGULATION</scope>
    <scope>SUBCELLULAR LOCATION</scope>
    <scope>TISSUE SPECIFICITY</scope>
    <scope>DEVELOPMENTAL STAGE</scope>
    <scope>INDUCTION</scope>
    <source>
        <tissue evidence="7">Hemocyte</tissue>
    </source>
</reference>
<reference key="2">
    <citation type="journal article" date="2009" name="Arch. Insect Biochem. Physiol.">
        <title>Expression, purification, and characterization of pro-phenoloxidase-activating serine protease from Spodoptera litura.</title>
        <authorList>
            <person name="Arora N."/>
            <person name="Hoque M.E."/>
            <person name="Rajagopal R."/>
            <person name="Sachdev B."/>
            <person name="Bhatnagar R.K."/>
        </authorList>
    </citation>
    <scope>FUNCTION</scope>
    <scope>ACTIVITY REGULATION</scope>
    <scope>PTM</scope>
    <scope>PROTEOLYTIC CLEAVAGE</scope>
</reference>
<name>PPO1_SPOLT</name>
<gene>
    <name evidence="7" type="primary">PPO1</name>
</gene>
<sequence length="697" mass="79822">MSDMSGDVVEHPKLLFDRPNEPLITPKGDNKAVFQLSEKLVPPEYANNGVELNDRFGDDATEKIPLKTLDSYPAFTKASQLPSDADFSLLLPKHQEMATEVIDAFMNVPLNQLQDFLSTCVYARANLNPQLFNYCYSVALMHRDDTKNVPIQNFAETFPSKFMDSQVFQRAREVTAVLPQNVPRIPIIIPRDYTATDLEEEHRLAYWREDIGVNLHHWHWHLVYPFTASQRSIVAKDRRGELFFHMHQQLIARYNCERLNHSLKRVKKFSNWREPIPEAYFPKLDSLTSARGWPPRQANMYWQDLNRPVDGLNITINDMERWRRNVEEAISTGRVTKADGSSAELDIDTLGNMLEASILSPNRELYGSIHNNGHSFAAYMHDPTHRYLESFGVIADEATTMRDPFFYRWHAWIDDTCQRHKESAYVRPYTRSELENPGVQVTSVSVETAGGQPNTLNTFWMSSDVDLSKGLDFSDRGAVYARFTYLNNRPFRYVININNTGSARRTTVRIFMAPKFDERNLVWSLADQRKMFIEMDRFVQPLNAGQNTITRNSTDSSVTIPFEQTFRDLSPQGSDPRRTSLAEFNFCGCGWPQHMLVPKGTEAGAAYQLFVMLSNYDLDSVDQPGGNQLSCVEASSFCGLKDKKYPDRRSMGFPFDRPSSIATNIEDFILPNMALQDITIRLSNVVEQNPRNPPSAV</sequence>
<accession>Q3ZPT5</accession>
<organism evidence="11">
    <name type="scientific">Spodoptera litura</name>
    <name type="common">Asian cotton leafworm</name>
    <dbReference type="NCBI Taxonomy" id="69820"/>
    <lineage>
        <taxon>Eukaryota</taxon>
        <taxon>Metazoa</taxon>
        <taxon>Ecdysozoa</taxon>
        <taxon>Arthropoda</taxon>
        <taxon>Hexapoda</taxon>
        <taxon>Insecta</taxon>
        <taxon>Pterygota</taxon>
        <taxon>Neoptera</taxon>
        <taxon>Endopterygota</taxon>
        <taxon>Lepidoptera</taxon>
        <taxon>Glossata</taxon>
        <taxon>Ditrysia</taxon>
        <taxon>Noctuoidea</taxon>
        <taxon>Noctuidae</taxon>
        <taxon>Amphipyrinae</taxon>
        <taxon>Spodoptera</taxon>
    </lineage>
</organism>
<dbReference type="EC" id="1.14.18.1" evidence="1"/>
<dbReference type="EMBL" id="AY703825">
    <property type="protein sequence ID" value="AAW22859.1"/>
    <property type="molecule type" value="mRNA"/>
</dbReference>
<dbReference type="SMR" id="Q3ZPT5"/>
<dbReference type="GlyCosmos" id="Q3ZPT5">
    <property type="glycosylation" value="4 sites, No reported glycans"/>
</dbReference>
<dbReference type="Proteomes" id="UP000301870">
    <property type="component" value="Unplaced"/>
</dbReference>
<dbReference type="GO" id="GO:0005576">
    <property type="term" value="C:extracellular region"/>
    <property type="evidence" value="ECO:0007669"/>
    <property type="project" value="UniProtKB-SubCell"/>
</dbReference>
<dbReference type="GO" id="GO:0046872">
    <property type="term" value="F:metal ion binding"/>
    <property type="evidence" value="ECO:0007669"/>
    <property type="project" value="UniProtKB-KW"/>
</dbReference>
<dbReference type="GO" id="GO:0004503">
    <property type="term" value="F:tyrosinase activity"/>
    <property type="evidence" value="ECO:0007669"/>
    <property type="project" value="UniProtKB-EC"/>
</dbReference>
<dbReference type="GO" id="GO:0042438">
    <property type="term" value="P:melanin biosynthetic process"/>
    <property type="evidence" value="ECO:0007669"/>
    <property type="project" value="UniProtKB-KW"/>
</dbReference>
<dbReference type="FunFam" id="1.10.1280.10:FF:000004">
    <property type="entry name" value="Hemocyanin subunit 2"/>
    <property type="match status" value="1"/>
</dbReference>
<dbReference type="FunFam" id="2.60.40.1520:FF:000001">
    <property type="entry name" value="Hemocyanin subunit 2"/>
    <property type="match status" value="1"/>
</dbReference>
<dbReference type="Gene3D" id="1.10.1280.10">
    <property type="entry name" value="Di-copper center containing domain from catechol oxidase"/>
    <property type="match status" value="1"/>
</dbReference>
<dbReference type="Gene3D" id="2.60.40.1520">
    <property type="entry name" value="Hemocyanin, C-terminal domain"/>
    <property type="match status" value="1"/>
</dbReference>
<dbReference type="Gene3D" id="1.20.1370.10">
    <property type="entry name" value="Hemocyanin, N-terminal domain"/>
    <property type="match status" value="1"/>
</dbReference>
<dbReference type="InterPro" id="IPR008922">
    <property type="entry name" value="Di-copper_centre_dom_sf"/>
</dbReference>
<dbReference type="InterPro" id="IPR013788">
    <property type="entry name" value="Hemocyanin/hexamerin"/>
</dbReference>
<dbReference type="InterPro" id="IPR000896">
    <property type="entry name" value="Hemocyanin/hexamerin_mid_dom"/>
</dbReference>
<dbReference type="InterPro" id="IPR005203">
    <property type="entry name" value="Hemocyanin_C"/>
</dbReference>
<dbReference type="InterPro" id="IPR037020">
    <property type="entry name" value="Hemocyanin_C_sf"/>
</dbReference>
<dbReference type="InterPro" id="IPR005204">
    <property type="entry name" value="Hemocyanin_N"/>
</dbReference>
<dbReference type="InterPro" id="IPR036697">
    <property type="entry name" value="Hemocyanin_N_sf"/>
</dbReference>
<dbReference type="InterPro" id="IPR014756">
    <property type="entry name" value="Ig_E-set"/>
</dbReference>
<dbReference type="InterPro" id="IPR002227">
    <property type="entry name" value="Tyrosinase_Cu-bd"/>
</dbReference>
<dbReference type="PANTHER" id="PTHR11511">
    <property type="entry name" value="LARVAL STORAGE PROTEIN/PHENOLOXIDASE"/>
    <property type="match status" value="1"/>
</dbReference>
<dbReference type="PANTHER" id="PTHR11511:SF4">
    <property type="entry name" value="PHENOLOXIDASE 2-RELATED"/>
    <property type="match status" value="1"/>
</dbReference>
<dbReference type="Pfam" id="PF03723">
    <property type="entry name" value="Hemocyanin_C"/>
    <property type="match status" value="1"/>
</dbReference>
<dbReference type="Pfam" id="PF00372">
    <property type="entry name" value="Hemocyanin_M"/>
    <property type="match status" value="1"/>
</dbReference>
<dbReference type="Pfam" id="PF03722">
    <property type="entry name" value="Hemocyanin_N"/>
    <property type="match status" value="1"/>
</dbReference>
<dbReference type="PRINTS" id="PR00187">
    <property type="entry name" value="HAEMOCYANIN"/>
</dbReference>
<dbReference type="SUPFAM" id="SSF48056">
    <property type="entry name" value="Di-copper centre-containing domain"/>
    <property type="match status" value="1"/>
</dbReference>
<dbReference type="SUPFAM" id="SSF81296">
    <property type="entry name" value="E set domains"/>
    <property type="match status" value="1"/>
</dbReference>
<dbReference type="SUPFAM" id="SSF48050">
    <property type="entry name" value="Hemocyanin, N-terminal domain"/>
    <property type="match status" value="1"/>
</dbReference>
<dbReference type="PROSITE" id="PS00209">
    <property type="entry name" value="HEMOCYANIN_1"/>
    <property type="match status" value="1"/>
</dbReference>
<dbReference type="PROSITE" id="PS00210">
    <property type="entry name" value="HEMOCYANIN_2"/>
    <property type="match status" value="1"/>
</dbReference>
<dbReference type="PROSITE" id="PS00498">
    <property type="entry name" value="TYROSINASE_2"/>
    <property type="match status" value="1"/>
</dbReference>
<evidence type="ECO:0000250" key="1">
    <source>
        <dbReference type="UniProtKB" id="C0HJM0"/>
    </source>
</evidence>
<evidence type="ECO:0000250" key="2">
    <source>
        <dbReference type="UniProtKB" id="Q25519"/>
    </source>
</evidence>
<evidence type="ECO:0000250" key="3">
    <source>
        <dbReference type="UniProtKB" id="Q8MZM3"/>
    </source>
</evidence>
<evidence type="ECO:0000255" key="4">
    <source>
        <dbReference type="PROSITE-ProRule" id="PRU00498"/>
    </source>
</evidence>
<evidence type="ECO:0000269" key="5">
    <source>
    </source>
</evidence>
<evidence type="ECO:0000269" key="6">
    <source>
    </source>
</evidence>
<evidence type="ECO:0000303" key="7">
    <source>
    </source>
</evidence>
<evidence type="ECO:0000303" key="8">
    <source>
    </source>
</evidence>
<evidence type="ECO:0000305" key="9"/>
<evidence type="ECO:0000305" key="10">
    <source>
    </source>
</evidence>
<evidence type="ECO:0000312" key="11">
    <source>
        <dbReference type="EMBL" id="AAW22859.1"/>
    </source>
</evidence>